<evidence type="ECO:0000255" key="1">
    <source>
        <dbReference type="HAMAP-Rule" id="MF_03217"/>
    </source>
</evidence>
<reference key="1">
    <citation type="journal article" date="2009" name="Genome Res.">
        <title>Comparative genomics of protoploid Saccharomycetaceae.</title>
        <authorList>
            <consortium name="The Genolevures Consortium"/>
            <person name="Souciet J.-L."/>
            <person name="Dujon B."/>
            <person name="Gaillardin C."/>
            <person name="Johnston M."/>
            <person name="Baret P.V."/>
            <person name="Cliften P."/>
            <person name="Sherman D.J."/>
            <person name="Weissenbach J."/>
            <person name="Westhof E."/>
            <person name="Wincker P."/>
            <person name="Jubin C."/>
            <person name="Poulain J."/>
            <person name="Barbe V."/>
            <person name="Segurens B."/>
            <person name="Artiguenave F."/>
            <person name="Anthouard V."/>
            <person name="Vacherie B."/>
            <person name="Val M.-E."/>
            <person name="Fulton R.S."/>
            <person name="Minx P."/>
            <person name="Wilson R."/>
            <person name="Durrens P."/>
            <person name="Jean G."/>
            <person name="Marck C."/>
            <person name="Martin T."/>
            <person name="Nikolski M."/>
            <person name="Rolland T."/>
            <person name="Seret M.-L."/>
            <person name="Casaregola S."/>
            <person name="Despons L."/>
            <person name="Fairhead C."/>
            <person name="Fischer G."/>
            <person name="Lafontaine I."/>
            <person name="Leh V."/>
            <person name="Lemaire M."/>
            <person name="de Montigny J."/>
            <person name="Neuveglise C."/>
            <person name="Thierry A."/>
            <person name="Blanc-Lenfle I."/>
            <person name="Bleykasten C."/>
            <person name="Diffels J."/>
            <person name="Fritsch E."/>
            <person name="Frangeul L."/>
            <person name="Goeffon A."/>
            <person name="Jauniaux N."/>
            <person name="Kachouri-Lafond R."/>
            <person name="Payen C."/>
            <person name="Potier S."/>
            <person name="Pribylova L."/>
            <person name="Ozanne C."/>
            <person name="Richard G.-F."/>
            <person name="Sacerdot C."/>
            <person name="Straub M.-L."/>
            <person name="Talla E."/>
        </authorList>
    </citation>
    <scope>NUCLEOTIDE SEQUENCE [LARGE SCALE GENOMIC DNA]</scope>
    <source>
        <strain>ATCC 2623 / CBS 732 / BCRC 21506 / NBRC 1130 / NCYC 568 / NRRL Y-229</strain>
    </source>
</reference>
<keyword id="KW-0256">Endoplasmic reticulum</keyword>
<keyword id="KW-0444">Lipid biosynthesis</keyword>
<keyword id="KW-0443">Lipid metabolism</keyword>
<keyword id="KW-0472">Membrane</keyword>
<keyword id="KW-0489">Methyltransferase</keyword>
<keyword id="KW-0594">Phospholipid biosynthesis</keyword>
<keyword id="KW-1208">Phospholipid metabolism</keyword>
<keyword id="KW-1185">Reference proteome</keyword>
<keyword id="KW-0949">S-adenosyl-L-methionine</keyword>
<keyword id="KW-0808">Transferase</keyword>
<keyword id="KW-0812">Transmembrane</keyword>
<keyword id="KW-1133">Transmembrane helix</keyword>
<organism>
    <name type="scientific">Zygosaccharomyces rouxii (strain ATCC 2623 / CBS 732 / NBRC 1130 / NCYC 568 / NRRL Y-229)</name>
    <dbReference type="NCBI Taxonomy" id="559307"/>
    <lineage>
        <taxon>Eukaryota</taxon>
        <taxon>Fungi</taxon>
        <taxon>Dikarya</taxon>
        <taxon>Ascomycota</taxon>
        <taxon>Saccharomycotina</taxon>
        <taxon>Saccharomycetes</taxon>
        <taxon>Saccharomycetales</taxon>
        <taxon>Saccharomycetaceae</taxon>
        <taxon>Zygosaccharomyces</taxon>
    </lineage>
</organism>
<sequence>MASDVVARTRSSGVTFTPPTTHDMVRSLFDPTVRKSFLEICITLALLSDFVFCYWGLQRFGLTSMKKAFLAQYLFWRLCYNLGIGVALHLQSRYETWTNYAKRNHVFTKGNHTPLARFCQFELKTKMSEGYDMYSQPEELNVWLLFRQFVDLILMQDFCTYMIYVYLSLPAQWSAMLNWRTGLGVSMILFNIWVKVDAHRVVKDYAWYWGDFFFLQESELVFDGVFNISPHPMYSIGYMGYYGLSLICGNYHVLLVSISGHLLQFLFLKYVESPHMEITYGSESSDDNSQINSCIDDLIATKNYDYSRPLINSGFWVNNFDKLRFTDYFTVGTSLALICWLFLERPSVKLLFNLTFFTKFVTSIVVCSILYLQSSQKWFTKLYLKNGYTQVYSYQQWQFIYNFSSCLTYTLLFIQTLAKLFDDNTYIEYTQFIFGLLLCAVQTWCNAEIRSAISDFGWFYGDFFLSNYIPTKSLTSHGIYRYLNNPETILGVAGVWGTVLMTDFSWENIALACLWSGCNFIIVKFIEQPHMAKLYGDNTRVGGIEKTLQGLGPWRRMSELMDRVENVITKSLTNQQEPFDKGLEKPRKDIKSVNNHLRVRTNSQEWEEAVEDAIGNVTSKLYPDCKFEIEDLGEKSFILPRPITIRWQVPIELFDEDAWIGLYNIIQTRSNSKTTKVSSSGHWSAVSPNAYKGYESNNLAVTEFEKNDTVACGKVTFDSSLLHFKPGIYEFRYHAGNSHNVLCTSKPFELLLPNLDMETPEILNKQLLQLLTSVSAVKNGKFDSHGNRYFTTRIFQRLVKDSLGVELSTDYINRVNGDIGAISQRICHIKKVLDDLE</sequence>
<feature type="chain" id="PRO_0000405925" description="Phosphatidylethanolamine N-methyltransferase">
    <location>
        <begin position="1"/>
        <end position="837"/>
    </location>
</feature>
<feature type="topological domain" description="Lumenal" evidence="1">
    <location>
        <begin position="1"/>
        <end position="36"/>
    </location>
</feature>
<feature type="transmembrane region" description="Helical" evidence="1">
    <location>
        <begin position="37"/>
        <end position="57"/>
    </location>
</feature>
<feature type="topological domain" description="Cytoplasmic" evidence="1">
    <location>
        <begin position="58"/>
        <end position="67"/>
    </location>
</feature>
<feature type="transmembrane region" description="Helical" evidence="1">
    <location>
        <begin position="68"/>
        <end position="88"/>
    </location>
</feature>
<feature type="topological domain" description="Lumenal" evidence="1">
    <location>
        <begin position="89"/>
        <end position="148"/>
    </location>
</feature>
<feature type="transmembrane region" description="Helical" evidence="1">
    <location>
        <begin position="149"/>
        <end position="169"/>
    </location>
</feature>
<feature type="topological domain" description="Cytoplasmic" evidence="1">
    <location>
        <begin position="170"/>
        <end position="173"/>
    </location>
</feature>
<feature type="transmembrane region" description="Helical" evidence="1">
    <location>
        <begin position="174"/>
        <end position="194"/>
    </location>
</feature>
<feature type="topological domain" description="Lumenal" evidence="1">
    <location>
        <begin position="195"/>
        <end position="205"/>
    </location>
</feature>
<feature type="transmembrane region" description="Helical" evidence="1">
    <location>
        <begin position="206"/>
        <end position="226"/>
    </location>
</feature>
<feature type="topological domain" description="Cytoplasmic" evidence="1">
    <location>
        <begin position="227"/>
        <end position="235"/>
    </location>
</feature>
<feature type="transmembrane region" description="Helical" evidence="1">
    <location>
        <begin position="236"/>
        <end position="256"/>
    </location>
</feature>
<feature type="topological domain" description="Lumenal" evidence="1">
    <location>
        <begin position="257"/>
        <end position="322"/>
    </location>
</feature>
<feature type="transmembrane region" description="Helical" evidence="1">
    <location>
        <begin position="323"/>
        <end position="343"/>
    </location>
</feature>
<feature type="topological domain" description="Cytoplasmic" evidence="1">
    <location>
        <begin position="344"/>
        <end position="349"/>
    </location>
</feature>
<feature type="transmembrane region" description="Helical" evidence="1">
    <location>
        <begin position="350"/>
        <end position="370"/>
    </location>
</feature>
<feature type="topological domain" description="Lumenal" evidence="1">
    <location>
        <begin position="371"/>
        <end position="396"/>
    </location>
</feature>
<feature type="transmembrane region" description="Helical" evidence="1">
    <location>
        <begin position="397"/>
        <end position="417"/>
    </location>
</feature>
<feature type="topological domain" description="Cytoplasmic" evidence="1">
    <location>
        <begin position="418"/>
        <end position="424"/>
    </location>
</feature>
<feature type="transmembrane region" description="Helical" evidence="1">
    <location>
        <begin position="425"/>
        <end position="445"/>
    </location>
</feature>
<feature type="topological domain" description="Lumenal" evidence="1">
    <location>
        <begin position="446"/>
        <end position="505"/>
    </location>
</feature>
<feature type="transmembrane region" description="Helical" evidence="1">
    <location>
        <begin position="506"/>
        <end position="526"/>
    </location>
</feature>
<feature type="topological domain" description="Cytoplasmic" evidence="1">
    <location>
        <begin position="527"/>
        <end position="837"/>
    </location>
</feature>
<gene>
    <name type="primary">CHO2</name>
    <name type="ordered locus">ZYRO0G07260g</name>
</gene>
<dbReference type="EC" id="2.1.1.17" evidence="1"/>
<dbReference type="EMBL" id="CU928179">
    <property type="protein sequence ID" value="CAR29377.1"/>
    <property type="molecule type" value="Genomic_DNA"/>
</dbReference>
<dbReference type="RefSeq" id="XP_002498310.1">
    <property type="nucleotide sequence ID" value="XM_002498265.1"/>
</dbReference>
<dbReference type="FunCoup" id="C5DZU3">
    <property type="interactions" value="96"/>
</dbReference>
<dbReference type="STRING" id="559307.C5DZU3"/>
<dbReference type="GeneID" id="8206112"/>
<dbReference type="KEGG" id="zro:ZYRO0G07260g"/>
<dbReference type="HOGENOM" id="CLU_005987_0_1_1"/>
<dbReference type="InParanoid" id="C5DZU3"/>
<dbReference type="UniPathway" id="UPA00753"/>
<dbReference type="Proteomes" id="UP000008536">
    <property type="component" value="Chromosome G"/>
</dbReference>
<dbReference type="GO" id="GO:0005789">
    <property type="term" value="C:endoplasmic reticulum membrane"/>
    <property type="evidence" value="ECO:0007669"/>
    <property type="project" value="UniProtKB-SubCell"/>
</dbReference>
<dbReference type="GO" id="GO:0004608">
    <property type="term" value="F:phosphatidylethanolamine N-methyltransferase activity"/>
    <property type="evidence" value="ECO:0007669"/>
    <property type="project" value="UniProtKB-UniRule"/>
</dbReference>
<dbReference type="GO" id="GO:0032259">
    <property type="term" value="P:methylation"/>
    <property type="evidence" value="ECO:0007669"/>
    <property type="project" value="UniProtKB-KW"/>
</dbReference>
<dbReference type="GO" id="GO:0006656">
    <property type="term" value="P:phosphatidylcholine biosynthetic process"/>
    <property type="evidence" value="ECO:0007669"/>
    <property type="project" value="UniProtKB-UniRule"/>
</dbReference>
<dbReference type="FunFam" id="1.20.120.1630:FF:000016">
    <property type="entry name" value="Phosphatidylethanolamine N-methyltransferase"/>
    <property type="match status" value="1"/>
</dbReference>
<dbReference type="Gene3D" id="1.20.120.1630">
    <property type="match status" value="1"/>
</dbReference>
<dbReference type="HAMAP" id="MF_03217">
    <property type="entry name" value="PEMT"/>
    <property type="match status" value="1"/>
</dbReference>
<dbReference type="InterPro" id="IPR007318">
    <property type="entry name" value="Phopholipid_MeTrfase"/>
</dbReference>
<dbReference type="InterPro" id="IPR016219">
    <property type="entry name" value="Phosphatid-EA_MeTrfase_fun"/>
</dbReference>
<dbReference type="PANTHER" id="PTHR32138">
    <property type="entry name" value="PHOSPHATIDYLETHANOLAMINE N-METHYLTRANSFERASE"/>
    <property type="match status" value="1"/>
</dbReference>
<dbReference type="PANTHER" id="PTHR32138:SF0">
    <property type="entry name" value="PHOSPHATIDYLETHANOLAMINE N-METHYLTRANSFERASE"/>
    <property type="match status" value="1"/>
</dbReference>
<dbReference type="Pfam" id="PF04191">
    <property type="entry name" value="PEMT"/>
    <property type="match status" value="2"/>
</dbReference>
<dbReference type="PIRSF" id="PIRSF000383">
    <property type="entry name" value="PEAMT"/>
    <property type="match status" value="1"/>
</dbReference>
<dbReference type="PROSITE" id="PS51598">
    <property type="entry name" value="SAM_CHO2"/>
    <property type="match status" value="1"/>
</dbReference>
<protein>
    <recommendedName>
        <fullName evidence="1">Phosphatidylethanolamine N-methyltransferase</fullName>
        <shortName evidence="1">PE methyltransferase</shortName>
        <shortName evidence="1">PEAMT</shortName>
        <shortName evidence="1">PEMT</shortName>
        <ecNumber evidence="1">2.1.1.17</ecNumber>
    </recommendedName>
</protein>
<comment type="function">
    <text evidence="1">Catalyzes the first step of the methylation pathway of phosphatidylcholine biosynthesis, the SAM-dependent methylation of phosphatidylethanolamine (PE) to phosphatidylmonomethylethanolamine (PMME).</text>
</comment>
<comment type="catalytic activity">
    <reaction evidence="1">
        <text>a 1,2-diacyl-sn-glycero-3-phosphoethanolamine + S-adenosyl-L-methionine = a 1,2-diacyl-sn-glycero-3-phospho-N-methylethanolamine + S-adenosyl-L-homocysteine + H(+)</text>
        <dbReference type="Rhea" id="RHEA:11164"/>
        <dbReference type="ChEBI" id="CHEBI:15378"/>
        <dbReference type="ChEBI" id="CHEBI:57856"/>
        <dbReference type="ChEBI" id="CHEBI:59789"/>
        <dbReference type="ChEBI" id="CHEBI:64573"/>
        <dbReference type="ChEBI" id="CHEBI:64612"/>
        <dbReference type="EC" id="2.1.1.17"/>
    </reaction>
</comment>
<comment type="pathway">
    <text evidence="1">Phospholipid metabolism; phosphatidylcholine biosynthesis.</text>
</comment>
<comment type="subcellular location">
    <subcellularLocation>
        <location evidence="1">Endoplasmic reticulum membrane</location>
        <topology evidence="1">Multi-pass membrane protein</topology>
    </subcellularLocation>
</comment>
<comment type="similarity">
    <text evidence="1">Belongs to the class VI-like SAM-binding methyltransferase superfamily. CHO2 family.</text>
</comment>
<name>CHO2_ZYGRC</name>
<proteinExistence type="inferred from homology"/>
<accession>C5DZU3</accession>